<name>Y2181_ARCFU</name>
<organism>
    <name type="scientific">Archaeoglobus fulgidus (strain ATCC 49558 / DSM 4304 / JCM 9628 / NBRC 100126 / VC-16)</name>
    <dbReference type="NCBI Taxonomy" id="224325"/>
    <lineage>
        <taxon>Archaea</taxon>
        <taxon>Methanobacteriati</taxon>
        <taxon>Methanobacteriota</taxon>
        <taxon>Archaeoglobi</taxon>
        <taxon>Archaeoglobales</taxon>
        <taxon>Archaeoglobaceae</taxon>
        <taxon>Archaeoglobus</taxon>
    </lineage>
</organism>
<gene>
    <name type="ordered locus">AF_2181</name>
</gene>
<keyword id="KW-1185">Reference proteome</keyword>
<accession>O28102</accession>
<proteinExistence type="predicted"/>
<sequence>MIKLSYLTSYITCPRLCYFRVHVGEKRFTELTAVREIYLSLKQGFDLDWAKKRAKALHGAFDEEAFRSAANKFIFPQIDCKSVEVDATIKSKSLGLLVSVDEIVECDGELLPLFLGLNPPENGVWFKDMVKAGAAALAGNYSKALIYYGYTGDLRPVEVTFSLKKKVIKLIERVKLIQRGFLPERKESRYCNYCSFSEDCKSRAETFASKFL</sequence>
<feature type="chain" id="PRO_0000128113" description="Uncharacterized protein AF_2181">
    <location>
        <begin position="1"/>
        <end position="212"/>
    </location>
</feature>
<protein>
    <recommendedName>
        <fullName>Uncharacterized protein AF_2181</fullName>
    </recommendedName>
</protein>
<dbReference type="EMBL" id="AE000782">
    <property type="protein sequence ID" value="AAB89076.1"/>
    <property type="molecule type" value="Genomic_DNA"/>
</dbReference>
<dbReference type="PIR" id="E69522">
    <property type="entry name" value="E69522"/>
</dbReference>
<dbReference type="RefSeq" id="WP_010879670.1">
    <property type="nucleotide sequence ID" value="NC_000917.1"/>
</dbReference>
<dbReference type="SMR" id="O28102"/>
<dbReference type="STRING" id="224325.AF_2181"/>
<dbReference type="PaxDb" id="224325-AF_2181"/>
<dbReference type="DNASU" id="1485409"/>
<dbReference type="EnsemblBacteria" id="AAB89076">
    <property type="protein sequence ID" value="AAB89076"/>
    <property type="gene ID" value="AF_2181"/>
</dbReference>
<dbReference type="KEGG" id="afu:AF_2181"/>
<dbReference type="eggNOG" id="arCOG00793">
    <property type="taxonomic scope" value="Archaea"/>
</dbReference>
<dbReference type="HOGENOM" id="CLU_1248228_0_0_2"/>
<dbReference type="OrthoDB" id="26676at2157"/>
<dbReference type="Proteomes" id="UP000002199">
    <property type="component" value="Chromosome"/>
</dbReference>
<dbReference type="Gene3D" id="3.90.320.10">
    <property type="match status" value="1"/>
</dbReference>
<dbReference type="InterPro" id="IPR011604">
    <property type="entry name" value="PDDEXK-like_dom_sf"/>
</dbReference>
<reference key="1">
    <citation type="journal article" date="1997" name="Nature">
        <title>The complete genome sequence of the hyperthermophilic, sulphate-reducing archaeon Archaeoglobus fulgidus.</title>
        <authorList>
            <person name="Klenk H.-P."/>
            <person name="Clayton R.A."/>
            <person name="Tomb J.-F."/>
            <person name="White O."/>
            <person name="Nelson K.E."/>
            <person name="Ketchum K.A."/>
            <person name="Dodson R.J."/>
            <person name="Gwinn M.L."/>
            <person name="Hickey E.K."/>
            <person name="Peterson J.D."/>
            <person name="Richardson D.L."/>
            <person name="Kerlavage A.R."/>
            <person name="Graham D.E."/>
            <person name="Kyrpides N.C."/>
            <person name="Fleischmann R.D."/>
            <person name="Quackenbush J."/>
            <person name="Lee N.H."/>
            <person name="Sutton G.G."/>
            <person name="Gill S.R."/>
            <person name="Kirkness E.F."/>
            <person name="Dougherty B.A."/>
            <person name="McKenney K."/>
            <person name="Adams M.D."/>
            <person name="Loftus B.J."/>
            <person name="Peterson S.N."/>
            <person name="Reich C.I."/>
            <person name="McNeil L.K."/>
            <person name="Badger J.H."/>
            <person name="Glodek A."/>
            <person name="Zhou L."/>
            <person name="Overbeek R."/>
            <person name="Gocayne J.D."/>
            <person name="Weidman J.F."/>
            <person name="McDonald L.A."/>
            <person name="Utterback T.R."/>
            <person name="Cotton M.D."/>
            <person name="Spriggs T."/>
            <person name="Artiach P."/>
            <person name="Kaine B.P."/>
            <person name="Sykes S.M."/>
            <person name="Sadow P.W."/>
            <person name="D'Andrea K.P."/>
            <person name="Bowman C."/>
            <person name="Fujii C."/>
            <person name="Garland S.A."/>
            <person name="Mason T.M."/>
            <person name="Olsen G.J."/>
            <person name="Fraser C.M."/>
            <person name="Smith H.O."/>
            <person name="Woese C.R."/>
            <person name="Venter J.C."/>
        </authorList>
    </citation>
    <scope>NUCLEOTIDE SEQUENCE [LARGE SCALE GENOMIC DNA]</scope>
    <source>
        <strain>ATCC 49558 / DSM 4304 / JCM 9628 / NBRC 100126 / VC-16</strain>
    </source>
</reference>